<evidence type="ECO:0000250" key="1"/>
<evidence type="ECO:0000250" key="2">
    <source>
        <dbReference type="UniProtKB" id="P61073"/>
    </source>
</evidence>
<evidence type="ECO:0000250" key="3">
    <source>
        <dbReference type="UniProtKB" id="P70658"/>
    </source>
</evidence>
<evidence type="ECO:0000255" key="4">
    <source>
        <dbReference type="PROSITE-ProRule" id="PRU00521"/>
    </source>
</evidence>
<evidence type="ECO:0000256" key="5">
    <source>
        <dbReference type="SAM" id="MobiDB-lite"/>
    </source>
</evidence>
<evidence type="ECO:0000305" key="6"/>
<evidence type="ECO:0000312" key="7">
    <source>
        <dbReference type="EMBL" id="AAH89804.1"/>
    </source>
</evidence>
<evidence type="ECO:0000312" key="8">
    <source>
        <dbReference type="EMBL" id="AAL47855.1"/>
    </source>
</evidence>
<feature type="chain" id="PRO_0000069358" description="C-X-C chemokine receptor type 4">
    <location>
        <begin position="1"/>
        <end position="349"/>
    </location>
</feature>
<feature type="topological domain" description="Extracellular" evidence="6">
    <location>
        <begin position="1"/>
        <end position="35"/>
    </location>
</feature>
<feature type="transmembrane region" description="Helical; Name=1" evidence="2">
    <location>
        <begin position="36"/>
        <end position="60"/>
    </location>
</feature>
<feature type="topological domain" description="Cytoplasmic" evidence="6">
    <location>
        <begin position="61"/>
        <end position="74"/>
    </location>
</feature>
<feature type="transmembrane region" description="Helical; Name=2" evidence="2">
    <location>
        <begin position="75"/>
        <end position="96"/>
    </location>
</feature>
<feature type="topological domain" description="Extracellular" evidence="6">
    <location>
        <begin position="97"/>
        <end position="107"/>
    </location>
</feature>
<feature type="transmembrane region" description="Helical; Name=3" evidence="2">
    <location>
        <begin position="108"/>
        <end position="127"/>
    </location>
</feature>
<feature type="topological domain" description="Cytoplasmic" evidence="6">
    <location>
        <begin position="128"/>
        <end position="151"/>
    </location>
</feature>
<feature type="transmembrane region" description="Helical; Name=4" evidence="2">
    <location>
        <begin position="152"/>
        <end position="171"/>
    </location>
</feature>
<feature type="topological domain" description="Extracellular" evidence="6">
    <location>
        <begin position="172"/>
        <end position="192"/>
    </location>
</feature>
<feature type="transmembrane region" description="Helical; Name=5" evidence="2">
    <location>
        <begin position="193"/>
        <end position="213"/>
    </location>
</feature>
<feature type="topological domain" description="Cytoplasmic" evidence="6">
    <location>
        <begin position="214"/>
        <end position="238"/>
    </location>
</feature>
<feature type="transmembrane region" description="Helical; Name=6" evidence="2">
    <location>
        <begin position="239"/>
        <end position="258"/>
    </location>
</feature>
<feature type="topological domain" description="Extracellular" evidence="6">
    <location>
        <begin position="259"/>
        <end position="279"/>
    </location>
</feature>
<feature type="transmembrane region" description="Helical; Name=7" evidence="2">
    <location>
        <begin position="280"/>
        <end position="299"/>
    </location>
</feature>
<feature type="topological domain" description="Cytoplasmic" evidence="6">
    <location>
        <begin position="300"/>
        <end position="349"/>
    </location>
</feature>
<feature type="region of interest" description="Disordered" evidence="5">
    <location>
        <begin position="1"/>
        <end position="23"/>
    </location>
</feature>
<feature type="region of interest" description="Important for chemokine binding and signaling" evidence="1">
    <location>
        <begin position="1"/>
        <end position="18"/>
    </location>
</feature>
<feature type="region of interest" description="Chemokine binding" evidence="1">
    <location>
        <begin position="91"/>
        <end position="94"/>
    </location>
</feature>
<feature type="region of interest" description="Chemokine binding" evidence="1">
    <location>
        <begin position="110"/>
        <end position="114"/>
    </location>
</feature>
<feature type="region of interest" description="Involved in dimerization; when bound to chemokine" evidence="1">
    <location>
        <begin position="132"/>
        <end position="144"/>
    </location>
</feature>
<feature type="region of interest" description="Chemokine binding, important for signaling" evidence="1">
    <location>
        <begin position="183"/>
        <end position="187"/>
    </location>
</feature>
<feature type="region of interest" description="Involved in dimerization" evidence="1">
    <location>
        <begin position="188"/>
        <end position="207"/>
    </location>
</feature>
<feature type="region of interest" description="Involved in dimerization" evidence="1">
    <location>
        <begin position="263"/>
        <end position="265"/>
    </location>
</feature>
<feature type="region of interest" description="Disordered" evidence="5">
    <location>
        <begin position="325"/>
        <end position="349"/>
    </location>
</feature>
<feature type="short sequence motif" description="Important for signaling" evidence="1">
    <location>
        <begin position="130"/>
        <end position="132"/>
    </location>
</feature>
<feature type="compositionally biased region" description="Low complexity" evidence="5">
    <location>
        <begin position="334"/>
        <end position="349"/>
    </location>
</feature>
<feature type="site" description="Chemokine binding" evidence="1">
    <location>
        <position position="168"/>
    </location>
</feature>
<feature type="site" description="Chemokine binding" evidence="1">
    <location>
        <position position="285"/>
    </location>
</feature>
<feature type="modified residue" description="Sulfotyrosine" evidence="2">
    <location>
        <position position="9"/>
    </location>
</feature>
<feature type="modified residue" description="Sulfotyrosine" evidence="2">
    <location>
        <position position="18"/>
    </location>
</feature>
<feature type="modified residue" description="Phosphoserine" evidence="2">
    <location>
        <position position="316"/>
    </location>
</feature>
<feature type="modified residue" description="Phosphoserine" evidence="2">
    <location>
        <position position="318"/>
    </location>
</feature>
<feature type="modified residue" description="Phosphoserine; by PKC and GRK6" evidence="2">
    <location>
        <position position="321"/>
    </location>
</feature>
<feature type="modified residue" description="Phosphoserine; by PKC and GRK6" evidence="2">
    <location>
        <position position="322"/>
    </location>
</feature>
<feature type="modified residue" description="Phosphoserine; by GRK6" evidence="2">
    <location>
        <position position="327"/>
    </location>
</feature>
<feature type="modified residue" description="Phosphoserine; by GRK6" evidence="2">
    <location>
        <position position="336"/>
    </location>
</feature>
<feature type="modified residue" description="Phosphoserine" evidence="2">
    <location>
        <position position="345"/>
    </location>
</feature>
<feature type="modified residue" description="Phosphoserine" evidence="2">
    <location>
        <position position="348"/>
    </location>
</feature>
<feature type="glycosylation site" description="N-linked (GlcNAc...) asparagine" evidence="1">
    <location>
        <position position="8"/>
    </location>
</feature>
<feature type="glycosylation site" description="O-linked (Xyl...) (chondroitin sulfate) serine" evidence="2">
    <location>
        <position position="15"/>
    </location>
</feature>
<feature type="disulfide bond" evidence="4">
    <location>
        <begin position="25"/>
        <end position="271"/>
    </location>
</feature>
<feature type="disulfide bond" evidence="4">
    <location>
        <begin position="106"/>
        <end position="183"/>
    </location>
</feature>
<feature type="cross-link" description="Glycyl lysine isopeptide (Lys-Gly) (interchain with G-Cter in ubiquitin)" evidence="2">
    <location>
        <position position="328"/>
    </location>
</feature>
<feature type="sequence conflict" description="In Ref. 1; AAB50408." ref="1">
    <original>RP</original>
    <variation>SA</variation>
    <location>
        <begin position="143"/>
        <end position="144"/>
    </location>
</feature>
<comment type="function">
    <text evidence="2 3">Receptor for the C-X-C chemokine CXCL12/SDF-1 that transduces a signal by increasing intracellular calcium ion levels and enhancing MAPK1/MAPK3 activation. Involved in the AKT signaling cascade (By similarity). Plays a role in regulation of cell migration, e.g. during wound healing. Acts as a receptor for extracellular ubiquitin; leading to enhanced intracellular calcium ions and reduced cellular cAMP levels. Binds bacterial lipopolysaccharide (LPS) et mediates LPS-induced inflammatory response, including TNF secretion by monocytes (By similarity). Involved in hematopoiesis and in cardiac ventricular septum formation. Also plays an essential role in vascularization of the gastrointestinal tract, probably by regulating vascular branching and/or remodeling processes in endothelial cells. Involved in cerebellar development. In the CNS, could mediate hippocampal-neuron survival (By similarity).</text>
</comment>
<comment type="subunit">
    <text evidence="2">Monomer. Can form homodimers. Interacts with CD164. Interacts with ARRB2; the interaction is dependent on the C-terminal phosphorylation of CXCR4 and allows activation of MAPK1 and MAPK3. Interacts with ARR3; the interaction is dependent on the C-terminal phosphorylation of CXCR4 and modulates calcium mobilization. Interacts with RNF113A; the interaction, enhanced by CXCL12, promotes CXCR4 ubiquitination and subsequent degradation. Interacts (via the cytoplasmic C-terminal) with ITCH (via the WW domains I and II); the interaction, enhanced by CXCL12, promotes CXCR4 ubiquitination and leads to its degradation. Interacts with extracellular ubiquitin. Interacts with DBN1; this interaction is enhanced by antigenic stimulation. Following LPS binding, may form a complex with GDF5, HSP90AA1 and HSPA8.</text>
</comment>
<comment type="subcellular location">
    <subcellularLocation>
        <location evidence="2">Cell membrane</location>
        <topology evidence="2">Multi-pass membrane protein</topology>
    </subcellularLocation>
    <subcellularLocation>
        <location evidence="1">Cell junction</location>
    </subcellularLocation>
    <subcellularLocation>
        <location evidence="1">Early endosome</location>
    </subcellularLocation>
    <subcellularLocation>
        <location evidence="1">Late endosome</location>
    </subcellularLocation>
    <subcellularLocation>
        <location evidence="1">Lysosome</location>
    </subcellularLocation>
    <text evidence="1">In unstimulated cells, diffuse pattern on plasma membrane. On agonist stimulation, colocalizes with ITCH at the plasma membrane where it becomes ubiquitinated (By similarity). In the presence of antigen, distributes to the immunological synapse forming at the T-cell-APC contact area, where it localizes at the peripheral and distal supramolecular activation cluster (SMAC) (By similarity).</text>
</comment>
<comment type="PTM">
    <text evidence="2">Phosphorylated on agonist stimulation. Rapidly phosphorylated on serine and threonine residues in the C-terminal. Phosphorylation at Ser-321 and Ser-322 leads to recruitment of ITCH, ubiquitination and protein degradation.</text>
</comment>
<comment type="PTM">
    <text evidence="2">Ubiquitinated after ligand binding, leading to its degradation. Ubiquitinated by ITCH at the cell membrane on agonist stimulation. The ubiquitin-dependent mechanism, endosomal sorting complex required for transport (ESCRT), then targets CXCR4 for lysosomal degradation. This process is dependent also on prior Ser-/Thr-phosphorylation in the C-terminal of CXCR4. Also binding of ARRB1 to STAM negatively regulates CXCR4 sorting to lysosomes though modulating ubiquitination of SFR5S.</text>
</comment>
<comment type="PTM">
    <text evidence="2">Sulfation is required for efficient binding of CXCL12/SDF-1alpha and promotes its dimerization.</text>
</comment>
<comment type="PTM">
    <text evidence="2">O- and N-glycosylated. N-glycosylation can mask coreceptor function. The O-glycosylation chondroitin sulfate attachment does not affect interaction with CXCL12/SDF-1alpha nor its coreceptor activity.</text>
</comment>
<comment type="similarity">
    <text evidence="4">Belongs to the G-protein coupled receptor 1 family.</text>
</comment>
<accession>O08565</accession>
<accession>F1LPN8</accession>
<accession>Q8VD47</accession>
<dbReference type="EMBL" id="U90610">
    <property type="protein sequence ID" value="AAB50408.1"/>
    <property type="molecule type" value="mRNA"/>
</dbReference>
<dbReference type="EMBL" id="AF452185">
    <property type="protein sequence ID" value="AAL47855.1"/>
    <property type="molecule type" value="mRNA"/>
</dbReference>
<dbReference type="EMBL" id="AABR07020898">
    <property type="status" value="NOT_ANNOTATED_CDS"/>
    <property type="molecule type" value="Genomic_DNA"/>
</dbReference>
<dbReference type="EMBL" id="CH473958">
    <property type="protein sequence ID" value="EDM09871.1"/>
    <property type="molecule type" value="Genomic_DNA"/>
</dbReference>
<dbReference type="EMBL" id="BC089804">
    <property type="protein sequence ID" value="AAH89804.1"/>
    <property type="molecule type" value="mRNA"/>
</dbReference>
<dbReference type="RefSeq" id="NP_071541.2">
    <property type="nucleotide sequence ID" value="NM_022205.3"/>
</dbReference>
<dbReference type="SMR" id="O08565"/>
<dbReference type="CORUM" id="O08565"/>
<dbReference type="FunCoup" id="O08565">
    <property type="interactions" value="689"/>
</dbReference>
<dbReference type="IntAct" id="O08565">
    <property type="interactions" value="5"/>
</dbReference>
<dbReference type="MINT" id="O08565"/>
<dbReference type="STRING" id="10116.ENSRNOP00000005143"/>
<dbReference type="BindingDB" id="O08565"/>
<dbReference type="ChEMBL" id="CHEMBL5556"/>
<dbReference type="DrugCentral" id="O08565"/>
<dbReference type="GuidetoPHARMACOLOGY" id="71"/>
<dbReference type="GlyCosmos" id="O08565">
    <property type="glycosylation" value="2 sites, No reported glycans"/>
</dbReference>
<dbReference type="GlyGen" id="O08565">
    <property type="glycosylation" value="2 sites"/>
</dbReference>
<dbReference type="PhosphoSitePlus" id="O08565"/>
<dbReference type="PaxDb" id="10116-ENSRNOP00000005143"/>
<dbReference type="Ensembl" id="ENSRNOT00000005143.7">
    <property type="protein sequence ID" value="ENSRNOP00000005143.5"/>
    <property type="gene ID" value="ENSRNOG00000003866.8"/>
</dbReference>
<dbReference type="GeneID" id="60628"/>
<dbReference type="KEGG" id="rno:60628"/>
<dbReference type="UCSC" id="RGD:620465">
    <property type="organism name" value="rat"/>
</dbReference>
<dbReference type="AGR" id="RGD:620465"/>
<dbReference type="CTD" id="7852"/>
<dbReference type="RGD" id="620465">
    <property type="gene designation" value="Cxcr4"/>
</dbReference>
<dbReference type="eggNOG" id="KOG3656">
    <property type="taxonomic scope" value="Eukaryota"/>
</dbReference>
<dbReference type="GeneTree" id="ENSGT01050000244848"/>
<dbReference type="HOGENOM" id="CLU_009579_8_3_1"/>
<dbReference type="InParanoid" id="O08565"/>
<dbReference type="OMA" id="YVCQRFY"/>
<dbReference type="OrthoDB" id="8413490at2759"/>
<dbReference type="PhylomeDB" id="O08565"/>
<dbReference type="Reactome" id="R-RNO-380108">
    <property type="pathway name" value="Chemokine receptors bind chemokines"/>
</dbReference>
<dbReference type="Reactome" id="R-RNO-418594">
    <property type="pathway name" value="G alpha (i) signalling events"/>
</dbReference>
<dbReference type="PRO" id="PR:O08565"/>
<dbReference type="Proteomes" id="UP000002494">
    <property type="component" value="Chromosome 13"/>
</dbReference>
<dbReference type="Proteomes" id="UP000234681">
    <property type="component" value="Chromosome 13"/>
</dbReference>
<dbReference type="Bgee" id="ENSRNOG00000003866">
    <property type="expression patterns" value="Expressed in thymus and 20 other cell types or tissues"/>
</dbReference>
<dbReference type="ExpressionAtlas" id="O08565">
    <property type="expression patterns" value="baseline and differential"/>
</dbReference>
<dbReference type="GO" id="GO:0031252">
    <property type="term" value="C:cell leading edge"/>
    <property type="evidence" value="ECO:0000266"/>
    <property type="project" value="RGD"/>
</dbReference>
<dbReference type="GO" id="GO:0009986">
    <property type="term" value="C:cell surface"/>
    <property type="evidence" value="ECO:0000266"/>
    <property type="project" value="RGD"/>
</dbReference>
<dbReference type="GO" id="GO:0005911">
    <property type="term" value="C:cell-cell junction"/>
    <property type="evidence" value="ECO:0000266"/>
    <property type="project" value="RGD"/>
</dbReference>
<dbReference type="GO" id="GO:0031410">
    <property type="term" value="C:cytoplasmic vesicle"/>
    <property type="evidence" value="ECO:0000266"/>
    <property type="project" value="RGD"/>
</dbReference>
<dbReference type="GO" id="GO:0005769">
    <property type="term" value="C:early endosome"/>
    <property type="evidence" value="ECO:0000250"/>
    <property type="project" value="UniProtKB"/>
</dbReference>
<dbReference type="GO" id="GO:0005768">
    <property type="term" value="C:endosome"/>
    <property type="evidence" value="ECO:0000314"/>
    <property type="project" value="RGD"/>
</dbReference>
<dbReference type="GO" id="GO:0009897">
    <property type="term" value="C:external side of plasma membrane"/>
    <property type="evidence" value="ECO:0000266"/>
    <property type="project" value="RGD"/>
</dbReference>
<dbReference type="GO" id="GO:0030426">
    <property type="term" value="C:growth cone"/>
    <property type="evidence" value="ECO:0000266"/>
    <property type="project" value="RGD"/>
</dbReference>
<dbReference type="GO" id="GO:0005770">
    <property type="term" value="C:late endosome"/>
    <property type="evidence" value="ECO:0000250"/>
    <property type="project" value="UniProtKB"/>
</dbReference>
<dbReference type="GO" id="GO:0005764">
    <property type="term" value="C:lysosome"/>
    <property type="evidence" value="ECO:0000250"/>
    <property type="project" value="UniProtKB"/>
</dbReference>
<dbReference type="GO" id="GO:0005886">
    <property type="term" value="C:plasma membrane"/>
    <property type="evidence" value="ECO:0000266"/>
    <property type="project" value="RGD"/>
</dbReference>
<dbReference type="GO" id="GO:0032991">
    <property type="term" value="C:protein-containing complex"/>
    <property type="evidence" value="ECO:0000266"/>
    <property type="project" value="RGD"/>
</dbReference>
<dbReference type="GO" id="GO:0003779">
    <property type="term" value="F:actin binding"/>
    <property type="evidence" value="ECO:0000266"/>
    <property type="project" value="RGD"/>
</dbReference>
<dbReference type="GO" id="GO:0019957">
    <property type="term" value="F:C-C chemokine binding"/>
    <property type="evidence" value="ECO:0000266"/>
    <property type="project" value="RGD"/>
</dbReference>
<dbReference type="GO" id="GO:0016493">
    <property type="term" value="F:C-C chemokine receptor activity"/>
    <property type="evidence" value="ECO:0000318"/>
    <property type="project" value="GO_Central"/>
</dbReference>
<dbReference type="GO" id="GO:0016494">
    <property type="term" value="F:C-X-C chemokine receptor activity"/>
    <property type="evidence" value="ECO:0000304"/>
    <property type="project" value="RGD"/>
</dbReference>
<dbReference type="GO" id="GO:0038147">
    <property type="term" value="F:C-X-C motif chemokine 12 receptor activity"/>
    <property type="evidence" value="ECO:0000250"/>
    <property type="project" value="UniProtKB"/>
</dbReference>
<dbReference type="GO" id="GO:0032027">
    <property type="term" value="F:myosin light chain binding"/>
    <property type="evidence" value="ECO:0000266"/>
    <property type="project" value="RGD"/>
</dbReference>
<dbReference type="GO" id="GO:0036094">
    <property type="term" value="F:small molecule binding"/>
    <property type="evidence" value="ECO:0000315"/>
    <property type="project" value="RGD"/>
</dbReference>
<dbReference type="GO" id="GO:0043130">
    <property type="term" value="F:ubiquitin binding"/>
    <property type="evidence" value="ECO:0000266"/>
    <property type="project" value="RGD"/>
</dbReference>
<dbReference type="GO" id="GO:0031625">
    <property type="term" value="F:ubiquitin protein ligase binding"/>
    <property type="evidence" value="ECO:0000266"/>
    <property type="project" value="RGD"/>
</dbReference>
<dbReference type="GO" id="GO:0001667">
    <property type="term" value="P:ameboidal-type cell migration"/>
    <property type="evidence" value="ECO:0000266"/>
    <property type="project" value="RGD"/>
</dbReference>
<dbReference type="GO" id="GO:0035904">
    <property type="term" value="P:aorta development"/>
    <property type="evidence" value="ECO:0000266"/>
    <property type="project" value="RGD"/>
</dbReference>
<dbReference type="GO" id="GO:0043534">
    <property type="term" value="P:blood vessel endothelial cell migration"/>
    <property type="evidence" value="ECO:0000266"/>
    <property type="project" value="RGD"/>
</dbReference>
<dbReference type="GO" id="GO:0007420">
    <property type="term" value="P:brain development"/>
    <property type="evidence" value="ECO:0000266"/>
    <property type="project" value="RGD"/>
</dbReference>
<dbReference type="GO" id="GO:0001569">
    <property type="term" value="P:branching involved in blood vessel morphogenesis"/>
    <property type="evidence" value="ECO:0000266"/>
    <property type="project" value="RGD"/>
</dbReference>
<dbReference type="GO" id="GO:0019722">
    <property type="term" value="P:calcium-mediated signaling"/>
    <property type="evidence" value="ECO:0000266"/>
    <property type="project" value="RGD"/>
</dbReference>
<dbReference type="GO" id="GO:0060048">
    <property type="term" value="P:cardiac muscle contraction"/>
    <property type="evidence" value="ECO:0000315"/>
    <property type="project" value="RGD"/>
</dbReference>
<dbReference type="GO" id="GO:0060326">
    <property type="term" value="P:cell chemotaxis"/>
    <property type="evidence" value="ECO:0000318"/>
    <property type="project" value="GO_Central"/>
</dbReference>
<dbReference type="GO" id="GO:0016477">
    <property type="term" value="P:cell migration"/>
    <property type="evidence" value="ECO:0000315"/>
    <property type="project" value="RGD"/>
</dbReference>
<dbReference type="GO" id="GO:0071345">
    <property type="term" value="P:cellular response to cytokine stimulus"/>
    <property type="evidence" value="ECO:0000250"/>
    <property type="project" value="UniProtKB"/>
</dbReference>
<dbReference type="GO" id="GO:0071466">
    <property type="term" value="P:cellular response to xenobiotic stimulus"/>
    <property type="evidence" value="ECO:0000270"/>
    <property type="project" value="RGD"/>
</dbReference>
<dbReference type="GO" id="GO:0038160">
    <property type="term" value="P:CXCL12-activated CXCR4 signaling pathway"/>
    <property type="evidence" value="ECO:0000250"/>
    <property type="project" value="UniProtKB"/>
</dbReference>
<dbReference type="GO" id="GO:0050966">
    <property type="term" value="P:detection of mechanical stimulus involved in sensory perception of pain"/>
    <property type="evidence" value="ECO:0000315"/>
    <property type="project" value="RGD"/>
</dbReference>
<dbReference type="GO" id="GO:0050965">
    <property type="term" value="P:detection of temperature stimulus involved in sensory perception of pain"/>
    <property type="evidence" value="ECO:0000315"/>
    <property type="project" value="RGD"/>
</dbReference>
<dbReference type="GO" id="GO:0045446">
    <property type="term" value="P:endothelial cell differentiation"/>
    <property type="evidence" value="ECO:0000315"/>
    <property type="project" value="RGD"/>
</dbReference>
<dbReference type="GO" id="GO:0061154">
    <property type="term" value="P:endothelial tube morphogenesis"/>
    <property type="evidence" value="ECO:0000315"/>
    <property type="project" value="RGD"/>
</dbReference>
<dbReference type="GO" id="GO:0002064">
    <property type="term" value="P:epithelial cell development"/>
    <property type="evidence" value="ECO:0000315"/>
    <property type="project" value="RGD"/>
</dbReference>
<dbReference type="GO" id="GO:0007186">
    <property type="term" value="P:G protein-coupled receptor signaling pathway"/>
    <property type="evidence" value="ECO:0000266"/>
    <property type="project" value="RGD"/>
</dbReference>
<dbReference type="GO" id="GO:0048699">
    <property type="term" value="P:generation of neurons"/>
    <property type="evidence" value="ECO:0000266"/>
    <property type="project" value="RGD"/>
</dbReference>
<dbReference type="GO" id="GO:0007281">
    <property type="term" value="P:germ cell development"/>
    <property type="evidence" value="ECO:0000266"/>
    <property type="project" value="RGD"/>
</dbReference>
<dbReference type="GO" id="GO:0008354">
    <property type="term" value="P:germ cell migration"/>
    <property type="evidence" value="ECO:0000266"/>
    <property type="project" value="RGD"/>
</dbReference>
<dbReference type="GO" id="GO:0035701">
    <property type="term" value="P:hematopoietic stem cell migration"/>
    <property type="evidence" value="ECO:0000266"/>
    <property type="project" value="RGD"/>
</dbReference>
<dbReference type="GO" id="GO:0006955">
    <property type="term" value="P:immune response"/>
    <property type="evidence" value="ECO:0000318"/>
    <property type="project" value="GO_Central"/>
</dbReference>
<dbReference type="GO" id="GO:0001822">
    <property type="term" value="P:kidney development"/>
    <property type="evidence" value="ECO:0000266"/>
    <property type="project" value="RGD"/>
</dbReference>
<dbReference type="GO" id="GO:0008045">
    <property type="term" value="P:motor neuron axon guidance"/>
    <property type="evidence" value="ECO:0000266"/>
    <property type="project" value="RGD"/>
</dbReference>
<dbReference type="GO" id="GO:0043217">
    <property type="term" value="P:myelin maintenance"/>
    <property type="evidence" value="ECO:0000266"/>
    <property type="project" value="RGD"/>
</dbReference>
<dbReference type="GO" id="GO:0061351">
    <property type="term" value="P:neural precursor cell proliferation"/>
    <property type="evidence" value="ECO:0000266"/>
    <property type="project" value="RGD"/>
</dbReference>
<dbReference type="GO" id="GO:0022008">
    <property type="term" value="P:neurogenesis"/>
    <property type="evidence" value="ECO:0000315"/>
    <property type="project" value="RGD"/>
</dbReference>
<dbReference type="GO" id="GO:0001764">
    <property type="term" value="P:neuron migration"/>
    <property type="evidence" value="ECO:0000314"/>
    <property type="project" value="RGD"/>
</dbReference>
<dbReference type="GO" id="GO:0008038">
    <property type="term" value="P:neuron recognition"/>
    <property type="evidence" value="ECO:0000270"/>
    <property type="project" value="RGD"/>
</dbReference>
<dbReference type="GO" id="GO:0030316">
    <property type="term" value="P:osteoclast differentiation"/>
    <property type="evidence" value="ECO:0007007"/>
    <property type="project" value="RGD"/>
</dbReference>
<dbReference type="GO" id="GO:0090280">
    <property type="term" value="P:positive regulation of calcium ion import"/>
    <property type="evidence" value="ECO:0000266"/>
    <property type="project" value="RGD"/>
</dbReference>
<dbReference type="GO" id="GO:0030335">
    <property type="term" value="P:positive regulation of cell migration"/>
    <property type="evidence" value="ECO:0000315"/>
    <property type="project" value="RGD"/>
</dbReference>
<dbReference type="GO" id="GO:0050921">
    <property type="term" value="P:positive regulation of chemotaxis"/>
    <property type="evidence" value="ECO:0000315"/>
    <property type="project" value="RGD"/>
</dbReference>
<dbReference type="GO" id="GO:0120162">
    <property type="term" value="P:positive regulation of cold-induced thermogenesis"/>
    <property type="evidence" value="ECO:0000250"/>
    <property type="project" value="YuBioLab"/>
</dbReference>
<dbReference type="GO" id="GO:0007204">
    <property type="term" value="P:positive regulation of cytosolic calcium ion concentration"/>
    <property type="evidence" value="ECO:0000318"/>
    <property type="project" value="GO_Central"/>
</dbReference>
<dbReference type="GO" id="GO:1903861">
    <property type="term" value="P:positive regulation of dendrite extension"/>
    <property type="evidence" value="ECO:0000315"/>
    <property type="project" value="RGD"/>
</dbReference>
<dbReference type="GO" id="GO:0070374">
    <property type="term" value="P:positive regulation of ERK1 and ERK2 cascade"/>
    <property type="evidence" value="ECO:0000266"/>
    <property type="project" value="RGD"/>
</dbReference>
<dbReference type="GO" id="GO:2000448">
    <property type="term" value="P:positive regulation of macrophage migration inhibitory factor signaling pathway"/>
    <property type="evidence" value="ECO:0000266"/>
    <property type="project" value="RGD"/>
</dbReference>
<dbReference type="GO" id="GO:1905322">
    <property type="term" value="P:positive regulation of mesenchymal stem cell migration"/>
    <property type="evidence" value="ECO:0000315"/>
    <property type="project" value="RGD"/>
</dbReference>
<dbReference type="GO" id="GO:0050769">
    <property type="term" value="P:positive regulation of neurogenesis"/>
    <property type="evidence" value="ECO:0000315"/>
    <property type="project" value="RGD"/>
</dbReference>
<dbReference type="GO" id="GO:0048714">
    <property type="term" value="P:positive regulation of oligodendrocyte differentiation"/>
    <property type="evidence" value="ECO:0000266"/>
    <property type="project" value="RGD"/>
</dbReference>
<dbReference type="GO" id="GO:0035470">
    <property type="term" value="P:positive regulation of vascular wound healing"/>
    <property type="evidence" value="ECO:0000315"/>
    <property type="project" value="RGD"/>
</dbReference>
<dbReference type="GO" id="GO:1904018">
    <property type="term" value="P:positive regulation of vasculature development"/>
    <property type="evidence" value="ECO:0000266"/>
    <property type="project" value="RGD"/>
</dbReference>
<dbReference type="GO" id="GO:0051924">
    <property type="term" value="P:regulation of calcium ion transport"/>
    <property type="evidence" value="ECO:0000315"/>
    <property type="project" value="RGD"/>
</dbReference>
<dbReference type="GO" id="GO:0030155">
    <property type="term" value="P:regulation of cell adhesion"/>
    <property type="evidence" value="ECO:0000266"/>
    <property type="project" value="RGD"/>
</dbReference>
<dbReference type="GO" id="GO:0030334">
    <property type="term" value="P:regulation of cell migration"/>
    <property type="evidence" value="ECO:0000266"/>
    <property type="project" value="RGD"/>
</dbReference>
<dbReference type="GO" id="GO:0050920">
    <property type="term" value="P:regulation of chemotaxis"/>
    <property type="evidence" value="ECO:0000315"/>
    <property type="project" value="RGD"/>
</dbReference>
<dbReference type="GO" id="GO:2001222">
    <property type="term" value="P:regulation of neuron migration"/>
    <property type="evidence" value="ECO:0000266"/>
    <property type="project" value="RGD"/>
</dbReference>
<dbReference type="GO" id="GO:0043067">
    <property type="term" value="P:regulation of programmed cell death"/>
    <property type="evidence" value="ECO:0000315"/>
    <property type="project" value="RGD"/>
</dbReference>
<dbReference type="GO" id="GO:0050792">
    <property type="term" value="P:regulation of viral process"/>
    <property type="evidence" value="ECO:0000314"/>
    <property type="project" value="RGD"/>
</dbReference>
<dbReference type="GO" id="GO:0014823">
    <property type="term" value="P:response to activity"/>
    <property type="evidence" value="ECO:0000270"/>
    <property type="project" value="RGD"/>
</dbReference>
<dbReference type="GO" id="GO:0001666">
    <property type="term" value="P:response to hypoxia"/>
    <property type="evidence" value="ECO:0000266"/>
    <property type="project" value="RGD"/>
</dbReference>
<dbReference type="GO" id="GO:1901327">
    <property type="term" value="P:response to tacrolimus"/>
    <property type="evidence" value="ECO:0000353"/>
    <property type="project" value="RGD"/>
</dbReference>
<dbReference type="GO" id="GO:1990478">
    <property type="term" value="P:response to ultrasound"/>
    <property type="evidence" value="ECO:0000270"/>
    <property type="project" value="RGD"/>
</dbReference>
<dbReference type="GO" id="GO:0042098">
    <property type="term" value="P:T cell proliferation"/>
    <property type="evidence" value="ECO:0000266"/>
    <property type="project" value="RGD"/>
</dbReference>
<dbReference type="GO" id="GO:0022029">
    <property type="term" value="P:telencephalon cell migration"/>
    <property type="evidence" value="ECO:0000315"/>
    <property type="project" value="RGD"/>
</dbReference>
<dbReference type="GO" id="GO:0003281">
    <property type="term" value="P:ventricular septum development"/>
    <property type="evidence" value="ECO:0000266"/>
    <property type="project" value="RGD"/>
</dbReference>
<dbReference type="CDD" id="cd15179">
    <property type="entry name" value="7tmA_CXCR4"/>
    <property type="match status" value="1"/>
</dbReference>
<dbReference type="FunFam" id="1.20.1070.10:FF:000063">
    <property type="entry name" value="C-X-C chemokine receptor type 4"/>
    <property type="match status" value="1"/>
</dbReference>
<dbReference type="Gene3D" id="1.20.1070.10">
    <property type="entry name" value="Rhodopsin 7-helix transmembrane proteins"/>
    <property type="match status" value="1"/>
</dbReference>
<dbReference type="InterPro" id="IPR050119">
    <property type="entry name" value="CCR1-9-like"/>
</dbReference>
<dbReference type="InterPro" id="IPR022726">
    <property type="entry name" value="Chemokine_CXCR4_N_dom"/>
</dbReference>
<dbReference type="InterPro" id="IPR000355">
    <property type="entry name" value="Chemokine_rcpt"/>
</dbReference>
<dbReference type="InterPro" id="IPR001277">
    <property type="entry name" value="CXCR4/ACKR2"/>
</dbReference>
<dbReference type="InterPro" id="IPR000276">
    <property type="entry name" value="GPCR_Rhodpsn"/>
</dbReference>
<dbReference type="InterPro" id="IPR017452">
    <property type="entry name" value="GPCR_Rhodpsn_7TM"/>
</dbReference>
<dbReference type="PANTHER" id="PTHR10489:SF594">
    <property type="entry name" value="C-X-C CHEMOKINE RECEPTOR TYPE 4"/>
    <property type="match status" value="1"/>
</dbReference>
<dbReference type="PANTHER" id="PTHR10489">
    <property type="entry name" value="CELL ADHESION MOLECULE"/>
    <property type="match status" value="1"/>
</dbReference>
<dbReference type="Pfam" id="PF00001">
    <property type="entry name" value="7tm_1"/>
    <property type="match status" value="1"/>
</dbReference>
<dbReference type="Pfam" id="PF12109">
    <property type="entry name" value="CXCR4_N"/>
    <property type="match status" value="1"/>
</dbReference>
<dbReference type="PRINTS" id="PR00657">
    <property type="entry name" value="CCCHEMOKINER"/>
</dbReference>
<dbReference type="PRINTS" id="PR00645">
    <property type="entry name" value="CXCCHMKINER4"/>
</dbReference>
<dbReference type="PRINTS" id="PR00237">
    <property type="entry name" value="GPCRRHODOPSN"/>
</dbReference>
<dbReference type="SUPFAM" id="SSF81321">
    <property type="entry name" value="Family A G protein-coupled receptor-like"/>
    <property type="match status" value="1"/>
</dbReference>
<dbReference type="PROSITE" id="PS00237">
    <property type="entry name" value="G_PROTEIN_RECEP_F1_1"/>
    <property type="match status" value="1"/>
</dbReference>
<dbReference type="PROSITE" id="PS50262">
    <property type="entry name" value="G_PROTEIN_RECEP_F1_2"/>
    <property type="match status" value="1"/>
</dbReference>
<sequence>MEIYTSDNYSEEVGSGDYDSNKEPCFRDENENFNRIFLPTIYFIIFLTGIVGNGLVILVMGYQKKLRSMTDKYRLHLSVADLLFVITLPFWAVDAMADWYFGKFLCKAVHIIYTVNLYSSVLILAFISLDRYLAIVHATNSQRPRKLLAEKAVYVGVWIPALLLTIPDIIFADVSQGDGRYICDRLYPDSLWMVVFQFQHIMVGLILPGIVILSCYCIIISKLSHSKGHQKRKALKTTVILILAFFACWLPYYVGISIDSFILLEVIKQGCEFESVVHKWISITEALAFFHCCLNPILYAFLGAKFKSSAQHALNSMSRGSSLKILSKGKRGGHSSVSTESESSSFHSS</sequence>
<protein>
    <recommendedName>
        <fullName>C-X-C chemokine receptor type 4</fullName>
        <shortName>CXC-R4</shortName>
        <shortName>CXCR-4</shortName>
    </recommendedName>
    <alternativeName>
        <fullName>Fusin</fullName>
    </alternativeName>
    <alternativeName>
        <fullName>Leukocyte-derived seven transmembrane domain receptor</fullName>
        <shortName>LESTR</shortName>
    </alternativeName>
    <alternativeName>
        <fullName>Stromal cell-derived factor 1 receptor</fullName>
        <shortName>SDF-1 receptor</shortName>
    </alternativeName>
    <cdAntigenName>CD184</cdAntigenName>
</protein>
<gene>
    <name type="primary">Cxcr4</name>
    <name type="synonym">Cmkar4</name>
</gene>
<keyword id="KW-0965">Cell junction</keyword>
<keyword id="KW-1003">Cell membrane</keyword>
<keyword id="KW-1015">Disulfide bond</keyword>
<keyword id="KW-0967">Endosome</keyword>
<keyword id="KW-0297">G-protein coupled receptor</keyword>
<keyword id="KW-0325">Glycoprotein</keyword>
<keyword id="KW-1017">Isopeptide bond</keyword>
<keyword id="KW-0458">Lysosome</keyword>
<keyword id="KW-0472">Membrane</keyword>
<keyword id="KW-0597">Phosphoprotein</keyword>
<keyword id="KW-0654">Proteoglycan</keyword>
<keyword id="KW-0675">Receptor</keyword>
<keyword id="KW-1185">Reference proteome</keyword>
<keyword id="KW-0765">Sulfation</keyword>
<keyword id="KW-0807">Transducer</keyword>
<keyword id="KW-0812">Transmembrane</keyword>
<keyword id="KW-1133">Transmembrane helix</keyword>
<keyword id="KW-0832">Ubl conjugation</keyword>
<reference key="1">
    <citation type="submission" date="1997-03" db="EMBL/GenBank/DDBJ databases">
        <title>Molecular cloning of rat CXCR4.</title>
        <authorList>
            <person name="Harrison J.K."/>
            <person name="Salafranca M.N."/>
        </authorList>
    </citation>
    <scope>NUCLEOTIDE SEQUENCE [MRNA]</scope>
    <source>
        <strain>Wistar</strain>
        <tissue>Spleen</tissue>
    </source>
</reference>
<reference evidence="8" key="2">
    <citation type="submission" date="2001-11" db="EMBL/GenBank/DDBJ databases">
        <title>Chemokine regulation of neuronal signaling and gp120 neurotoxicity.</title>
        <authorList>
            <person name="Simen A.A."/>
            <person name="Miller R.J."/>
        </authorList>
    </citation>
    <scope>NUCLEOTIDE SEQUENCE [MRNA]</scope>
    <source>
        <strain evidence="8">Holtzman</strain>
        <tissue evidence="8">Brain</tissue>
    </source>
</reference>
<reference key="3">
    <citation type="journal article" date="2004" name="Nature">
        <title>Genome sequence of the Brown Norway rat yields insights into mammalian evolution.</title>
        <authorList>
            <person name="Gibbs R.A."/>
            <person name="Weinstock G.M."/>
            <person name="Metzker M.L."/>
            <person name="Muzny D.M."/>
            <person name="Sodergren E.J."/>
            <person name="Scherer S."/>
            <person name="Scott G."/>
            <person name="Steffen D."/>
            <person name="Worley K.C."/>
            <person name="Burch P.E."/>
            <person name="Okwuonu G."/>
            <person name="Hines S."/>
            <person name="Lewis L."/>
            <person name="Deramo C."/>
            <person name="Delgado O."/>
            <person name="Dugan-Rocha S."/>
            <person name="Miner G."/>
            <person name="Morgan M."/>
            <person name="Hawes A."/>
            <person name="Gill R."/>
            <person name="Holt R.A."/>
            <person name="Adams M.D."/>
            <person name="Amanatides P.G."/>
            <person name="Baden-Tillson H."/>
            <person name="Barnstead M."/>
            <person name="Chin S."/>
            <person name="Evans C.A."/>
            <person name="Ferriera S."/>
            <person name="Fosler C."/>
            <person name="Glodek A."/>
            <person name="Gu Z."/>
            <person name="Jennings D."/>
            <person name="Kraft C.L."/>
            <person name="Nguyen T."/>
            <person name="Pfannkoch C.M."/>
            <person name="Sitter C."/>
            <person name="Sutton G.G."/>
            <person name="Venter J.C."/>
            <person name="Woodage T."/>
            <person name="Smith D."/>
            <person name="Lee H.-M."/>
            <person name="Gustafson E."/>
            <person name="Cahill P."/>
            <person name="Kana A."/>
            <person name="Doucette-Stamm L."/>
            <person name="Weinstock K."/>
            <person name="Fechtel K."/>
            <person name="Weiss R.B."/>
            <person name="Dunn D.M."/>
            <person name="Green E.D."/>
            <person name="Blakesley R.W."/>
            <person name="Bouffard G.G."/>
            <person name="De Jong P.J."/>
            <person name="Osoegawa K."/>
            <person name="Zhu B."/>
            <person name="Marra M."/>
            <person name="Schein J."/>
            <person name="Bosdet I."/>
            <person name="Fjell C."/>
            <person name="Jones S."/>
            <person name="Krzywinski M."/>
            <person name="Mathewson C."/>
            <person name="Siddiqui A."/>
            <person name="Wye N."/>
            <person name="McPherson J."/>
            <person name="Zhao S."/>
            <person name="Fraser C.M."/>
            <person name="Shetty J."/>
            <person name="Shatsman S."/>
            <person name="Geer K."/>
            <person name="Chen Y."/>
            <person name="Abramzon S."/>
            <person name="Nierman W.C."/>
            <person name="Havlak P.H."/>
            <person name="Chen R."/>
            <person name="Durbin K.J."/>
            <person name="Egan A."/>
            <person name="Ren Y."/>
            <person name="Song X.-Z."/>
            <person name="Li B."/>
            <person name="Liu Y."/>
            <person name="Qin X."/>
            <person name="Cawley S."/>
            <person name="Cooney A.J."/>
            <person name="D'Souza L.M."/>
            <person name="Martin K."/>
            <person name="Wu J.Q."/>
            <person name="Gonzalez-Garay M.L."/>
            <person name="Jackson A.R."/>
            <person name="Kalafus K.J."/>
            <person name="McLeod M.P."/>
            <person name="Milosavljevic A."/>
            <person name="Virk D."/>
            <person name="Volkov A."/>
            <person name="Wheeler D.A."/>
            <person name="Zhang Z."/>
            <person name="Bailey J.A."/>
            <person name="Eichler E.E."/>
            <person name="Tuzun E."/>
            <person name="Birney E."/>
            <person name="Mongin E."/>
            <person name="Ureta-Vidal A."/>
            <person name="Woodwark C."/>
            <person name="Zdobnov E."/>
            <person name="Bork P."/>
            <person name="Suyama M."/>
            <person name="Torrents D."/>
            <person name="Alexandersson M."/>
            <person name="Trask B.J."/>
            <person name="Young J.M."/>
            <person name="Huang H."/>
            <person name="Wang H."/>
            <person name="Xing H."/>
            <person name="Daniels S."/>
            <person name="Gietzen D."/>
            <person name="Schmidt J."/>
            <person name="Stevens K."/>
            <person name="Vitt U."/>
            <person name="Wingrove J."/>
            <person name="Camara F."/>
            <person name="Mar Alba M."/>
            <person name="Abril J.F."/>
            <person name="Guigo R."/>
            <person name="Smit A."/>
            <person name="Dubchak I."/>
            <person name="Rubin E.M."/>
            <person name="Couronne O."/>
            <person name="Poliakov A."/>
            <person name="Huebner N."/>
            <person name="Ganten D."/>
            <person name="Goesele C."/>
            <person name="Hummel O."/>
            <person name="Kreitler T."/>
            <person name="Lee Y.-A."/>
            <person name="Monti J."/>
            <person name="Schulz H."/>
            <person name="Zimdahl H."/>
            <person name="Himmelbauer H."/>
            <person name="Lehrach H."/>
            <person name="Jacob H.J."/>
            <person name="Bromberg S."/>
            <person name="Gullings-Handley J."/>
            <person name="Jensen-Seaman M.I."/>
            <person name="Kwitek A.E."/>
            <person name="Lazar J."/>
            <person name="Pasko D."/>
            <person name="Tonellato P.J."/>
            <person name="Twigger S."/>
            <person name="Ponting C.P."/>
            <person name="Duarte J.M."/>
            <person name="Rice S."/>
            <person name="Goodstadt L."/>
            <person name="Beatson S.A."/>
            <person name="Emes R.D."/>
            <person name="Winter E.E."/>
            <person name="Webber C."/>
            <person name="Brandt P."/>
            <person name="Nyakatura G."/>
            <person name="Adetobi M."/>
            <person name="Chiaromonte F."/>
            <person name="Elnitski L."/>
            <person name="Eswara P."/>
            <person name="Hardison R.C."/>
            <person name="Hou M."/>
            <person name="Kolbe D."/>
            <person name="Makova K."/>
            <person name="Miller W."/>
            <person name="Nekrutenko A."/>
            <person name="Riemer C."/>
            <person name="Schwartz S."/>
            <person name="Taylor J."/>
            <person name="Yang S."/>
            <person name="Zhang Y."/>
            <person name="Lindpaintner K."/>
            <person name="Andrews T.D."/>
            <person name="Caccamo M."/>
            <person name="Clamp M."/>
            <person name="Clarke L."/>
            <person name="Curwen V."/>
            <person name="Durbin R.M."/>
            <person name="Eyras E."/>
            <person name="Searle S.M."/>
            <person name="Cooper G.M."/>
            <person name="Batzoglou S."/>
            <person name="Brudno M."/>
            <person name="Sidow A."/>
            <person name="Stone E.A."/>
            <person name="Payseur B.A."/>
            <person name="Bourque G."/>
            <person name="Lopez-Otin C."/>
            <person name="Puente X.S."/>
            <person name="Chakrabarti K."/>
            <person name="Chatterji S."/>
            <person name="Dewey C."/>
            <person name="Pachter L."/>
            <person name="Bray N."/>
            <person name="Yap V.B."/>
            <person name="Caspi A."/>
            <person name="Tesler G."/>
            <person name="Pevzner P.A."/>
            <person name="Haussler D."/>
            <person name="Roskin K.M."/>
            <person name="Baertsch R."/>
            <person name="Clawson H."/>
            <person name="Furey T.S."/>
            <person name="Hinrichs A.S."/>
            <person name="Karolchik D."/>
            <person name="Kent W.J."/>
            <person name="Rosenbloom K.R."/>
            <person name="Trumbower H."/>
            <person name="Weirauch M."/>
            <person name="Cooper D.N."/>
            <person name="Stenson P.D."/>
            <person name="Ma B."/>
            <person name="Brent M."/>
            <person name="Arumugam M."/>
            <person name="Shteynberg D."/>
            <person name="Copley R.R."/>
            <person name="Taylor M.S."/>
            <person name="Riethman H."/>
            <person name="Mudunuri U."/>
            <person name="Peterson J."/>
            <person name="Guyer M."/>
            <person name="Felsenfeld A."/>
            <person name="Old S."/>
            <person name="Mockrin S."/>
            <person name="Collins F.S."/>
        </authorList>
    </citation>
    <scope>NUCLEOTIDE SEQUENCE [LARGE SCALE GENOMIC DNA]</scope>
    <source>
        <strain>Brown Norway</strain>
    </source>
</reference>
<reference key="4">
    <citation type="submission" date="2005-09" db="EMBL/GenBank/DDBJ databases">
        <authorList>
            <person name="Mural R.J."/>
            <person name="Adams M.D."/>
            <person name="Myers E.W."/>
            <person name="Smith H.O."/>
            <person name="Venter J.C."/>
        </authorList>
    </citation>
    <scope>NUCLEOTIDE SEQUENCE [LARGE SCALE GENOMIC DNA]</scope>
</reference>
<reference key="5">
    <citation type="journal article" date="2004" name="Genome Res.">
        <title>The status, quality, and expansion of the NIH full-length cDNA project: the Mammalian Gene Collection (MGC).</title>
        <authorList>
            <consortium name="The MGC Project Team"/>
        </authorList>
    </citation>
    <scope>NUCLEOTIDE SEQUENCE [LARGE SCALE MRNA]</scope>
    <source>
        <tissue evidence="7">Thymus</tissue>
    </source>
</reference>
<organism>
    <name type="scientific">Rattus norvegicus</name>
    <name type="common">Rat</name>
    <dbReference type="NCBI Taxonomy" id="10116"/>
    <lineage>
        <taxon>Eukaryota</taxon>
        <taxon>Metazoa</taxon>
        <taxon>Chordata</taxon>
        <taxon>Craniata</taxon>
        <taxon>Vertebrata</taxon>
        <taxon>Euteleostomi</taxon>
        <taxon>Mammalia</taxon>
        <taxon>Eutheria</taxon>
        <taxon>Euarchontoglires</taxon>
        <taxon>Glires</taxon>
        <taxon>Rodentia</taxon>
        <taxon>Myomorpha</taxon>
        <taxon>Muroidea</taxon>
        <taxon>Muridae</taxon>
        <taxon>Murinae</taxon>
        <taxon>Rattus</taxon>
    </lineage>
</organism>
<name>CXCR4_RAT</name>
<proteinExistence type="evidence at transcript level"/>